<accession>P76241</accession>
<accession>Q2MB28</accession>
<sequence length="273" mass="30554">MMHRLNLNGYEPDRHHEAAVAFCIHAGTDELTSPVHQHRKGQLILALHGAITCTVENALWMVPPQYAVWIPGGVEHSNQVTANAELCFLFIEPSAVTMPTTCCTLKISPLCRELILTLANRTTTQRAEPMTRRLIQVLFDELPQQPQQQLHLPVSSHPKIRTMVEMMAKGPVEWGALGQWAGFFAMSERNLARLIVKETGLSFRQWRQQLQLIMALQGLVKGDTVQKVAHTLGYDSTTAFITMFKKGLGQTPGRYIARLTTVSPQSAKPDPRQ</sequence>
<feature type="chain" id="PRO_0000194611" description="HTH-type transcriptional regulator NimR">
    <location>
        <begin position="1"/>
        <end position="273"/>
    </location>
</feature>
<feature type="domain" description="HTH araC/xylS-type" evidence="1">
    <location>
        <begin position="158"/>
        <end position="258"/>
    </location>
</feature>
<feature type="DNA-binding region" description="H-T-H motif" evidence="1">
    <location>
        <begin position="178"/>
        <end position="199"/>
    </location>
</feature>
<feature type="DNA-binding region" description="H-T-H motif" evidence="1">
    <location>
        <begin position="225"/>
        <end position="248"/>
    </location>
</feature>
<proteinExistence type="evidence at transcript level"/>
<dbReference type="EMBL" id="U00096">
    <property type="protein sequence ID" value="AAC74860.1"/>
    <property type="molecule type" value="Genomic_DNA"/>
</dbReference>
<dbReference type="EMBL" id="AP009048">
    <property type="protein sequence ID" value="BAE76528.1"/>
    <property type="molecule type" value="Genomic_DNA"/>
</dbReference>
<dbReference type="PIR" id="F64939">
    <property type="entry name" value="F64939"/>
</dbReference>
<dbReference type="RefSeq" id="NP_416304.1">
    <property type="nucleotide sequence ID" value="NC_000913.3"/>
</dbReference>
<dbReference type="RefSeq" id="WP_000972248.1">
    <property type="nucleotide sequence ID" value="NZ_SSZK01000001.1"/>
</dbReference>
<dbReference type="SMR" id="P76241"/>
<dbReference type="BioGRID" id="4260327">
    <property type="interactions" value="169"/>
</dbReference>
<dbReference type="FunCoup" id="P76241">
    <property type="interactions" value="249"/>
</dbReference>
<dbReference type="IntAct" id="P76241">
    <property type="interactions" value="15"/>
</dbReference>
<dbReference type="STRING" id="511145.b1790"/>
<dbReference type="PaxDb" id="511145-b1790"/>
<dbReference type="EnsemblBacteria" id="AAC74860">
    <property type="protein sequence ID" value="AAC74860"/>
    <property type="gene ID" value="b1790"/>
</dbReference>
<dbReference type="GeneID" id="946590"/>
<dbReference type="KEGG" id="ecj:JW1779"/>
<dbReference type="KEGG" id="eco:b1790"/>
<dbReference type="KEGG" id="ecoc:C3026_10205"/>
<dbReference type="PATRIC" id="fig|511145.12.peg.1864"/>
<dbReference type="EchoBASE" id="EB3272"/>
<dbReference type="eggNOG" id="COG2207">
    <property type="taxonomic scope" value="Bacteria"/>
</dbReference>
<dbReference type="HOGENOM" id="CLU_000445_87_0_6"/>
<dbReference type="InParanoid" id="P76241"/>
<dbReference type="OMA" id="RHDDHQI"/>
<dbReference type="OrthoDB" id="5949386at2"/>
<dbReference type="PhylomeDB" id="P76241"/>
<dbReference type="BioCyc" id="EcoCyc:G6976-MONOMER"/>
<dbReference type="PRO" id="PR:P76241"/>
<dbReference type="Proteomes" id="UP000000625">
    <property type="component" value="Chromosome"/>
</dbReference>
<dbReference type="GO" id="GO:0003677">
    <property type="term" value="F:DNA binding"/>
    <property type="evidence" value="ECO:0000314"/>
    <property type="project" value="EcoCyc"/>
</dbReference>
<dbReference type="GO" id="GO:0003700">
    <property type="term" value="F:DNA-binding transcription factor activity"/>
    <property type="evidence" value="ECO:0007669"/>
    <property type="project" value="InterPro"/>
</dbReference>
<dbReference type="GO" id="GO:0043565">
    <property type="term" value="F:sequence-specific DNA binding"/>
    <property type="evidence" value="ECO:0007669"/>
    <property type="project" value="InterPro"/>
</dbReference>
<dbReference type="GO" id="GO:0045892">
    <property type="term" value="P:negative regulation of DNA-templated transcription"/>
    <property type="evidence" value="ECO:0000314"/>
    <property type="project" value="EcoCyc"/>
</dbReference>
<dbReference type="GO" id="GO:0006355">
    <property type="term" value="P:regulation of DNA-templated transcription"/>
    <property type="evidence" value="ECO:0000318"/>
    <property type="project" value="GO_Central"/>
</dbReference>
<dbReference type="CDD" id="cd06124">
    <property type="entry name" value="cupin_NimR-like_N"/>
    <property type="match status" value="1"/>
</dbReference>
<dbReference type="FunFam" id="1.10.10.60:FF:000132">
    <property type="entry name" value="AraC family transcriptional regulator"/>
    <property type="match status" value="1"/>
</dbReference>
<dbReference type="FunFam" id="2.60.120.10:FF:000134">
    <property type="entry name" value="AraC family transcriptional regulator"/>
    <property type="match status" value="1"/>
</dbReference>
<dbReference type="Gene3D" id="1.10.10.60">
    <property type="entry name" value="Homeodomain-like"/>
    <property type="match status" value="1"/>
</dbReference>
<dbReference type="Gene3D" id="2.60.120.10">
    <property type="entry name" value="Jelly Rolls"/>
    <property type="match status" value="1"/>
</dbReference>
<dbReference type="InterPro" id="IPR003313">
    <property type="entry name" value="AraC-bd"/>
</dbReference>
<dbReference type="InterPro" id="IPR009057">
    <property type="entry name" value="Homeodomain-like_sf"/>
</dbReference>
<dbReference type="InterPro" id="IPR018060">
    <property type="entry name" value="HTH_AraC"/>
</dbReference>
<dbReference type="InterPro" id="IPR018062">
    <property type="entry name" value="HTH_AraC-typ_CS"/>
</dbReference>
<dbReference type="InterPro" id="IPR014710">
    <property type="entry name" value="RmlC-like_jellyroll"/>
</dbReference>
<dbReference type="InterPro" id="IPR011051">
    <property type="entry name" value="RmlC_Cupin_sf"/>
</dbReference>
<dbReference type="PANTHER" id="PTHR11019">
    <property type="entry name" value="HTH-TYPE TRANSCRIPTIONAL REGULATOR NIMR"/>
    <property type="match status" value="1"/>
</dbReference>
<dbReference type="PANTHER" id="PTHR11019:SF199">
    <property type="entry name" value="HTH-TYPE TRANSCRIPTIONAL REGULATOR NIMR"/>
    <property type="match status" value="1"/>
</dbReference>
<dbReference type="Pfam" id="PF02311">
    <property type="entry name" value="AraC_binding"/>
    <property type="match status" value="1"/>
</dbReference>
<dbReference type="Pfam" id="PF12833">
    <property type="entry name" value="HTH_18"/>
    <property type="match status" value="1"/>
</dbReference>
<dbReference type="SMART" id="SM00342">
    <property type="entry name" value="HTH_ARAC"/>
    <property type="match status" value="1"/>
</dbReference>
<dbReference type="SUPFAM" id="SSF46689">
    <property type="entry name" value="Homeodomain-like"/>
    <property type="match status" value="1"/>
</dbReference>
<dbReference type="SUPFAM" id="SSF51182">
    <property type="entry name" value="RmlC-like cupins"/>
    <property type="match status" value="1"/>
</dbReference>
<dbReference type="PROSITE" id="PS00041">
    <property type="entry name" value="HTH_ARAC_FAMILY_1"/>
    <property type="match status" value="1"/>
</dbReference>
<dbReference type="PROSITE" id="PS01124">
    <property type="entry name" value="HTH_ARAC_FAMILY_2"/>
    <property type="match status" value="1"/>
</dbReference>
<keyword id="KW-0238">DNA-binding</keyword>
<keyword id="KW-1185">Reference proteome</keyword>
<keyword id="KW-0678">Repressor</keyword>
<keyword id="KW-0804">Transcription</keyword>
<keyword id="KW-0805">Transcription regulation</keyword>
<organism>
    <name type="scientific">Escherichia coli (strain K12)</name>
    <dbReference type="NCBI Taxonomy" id="83333"/>
    <lineage>
        <taxon>Bacteria</taxon>
        <taxon>Pseudomonadati</taxon>
        <taxon>Pseudomonadota</taxon>
        <taxon>Gammaproteobacteria</taxon>
        <taxon>Enterobacterales</taxon>
        <taxon>Enterobacteriaceae</taxon>
        <taxon>Escherichia</taxon>
    </lineage>
</organism>
<gene>
    <name evidence="3" type="primary">nimR</name>
    <name type="synonym">yeaM</name>
    <name type="ordered locus">b1790</name>
    <name type="ordered locus">JW1779</name>
</gene>
<protein>
    <recommendedName>
        <fullName evidence="4">HTH-type transcriptional regulator NimR</fullName>
    </recommendedName>
    <alternativeName>
        <fullName evidence="3">Regulator of nimT</fullName>
    </alternativeName>
</protein>
<name>NIMR_ECOLI</name>
<evidence type="ECO:0000255" key="1">
    <source>
        <dbReference type="PROSITE-ProRule" id="PRU00593"/>
    </source>
</evidence>
<evidence type="ECO:0000269" key="2">
    <source>
    </source>
</evidence>
<evidence type="ECO:0000303" key="3">
    <source>
    </source>
</evidence>
<evidence type="ECO:0000305" key="4"/>
<comment type="function">
    <text evidence="2">Negatively regulates expression of the nimT operon and its own expression. Acts by binding to the nimR-nimT intergenic region.</text>
</comment>
<comment type="induction">
    <text evidence="2">Negatively autoregulated.</text>
</comment>
<reference key="1">
    <citation type="journal article" date="1997" name="Science">
        <title>The complete genome sequence of Escherichia coli K-12.</title>
        <authorList>
            <person name="Blattner F.R."/>
            <person name="Plunkett G. III"/>
            <person name="Bloch C.A."/>
            <person name="Perna N.T."/>
            <person name="Burland V."/>
            <person name="Riley M."/>
            <person name="Collado-Vides J."/>
            <person name="Glasner J.D."/>
            <person name="Rode C.K."/>
            <person name="Mayhew G.F."/>
            <person name="Gregor J."/>
            <person name="Davis N.W."/>
            <person name="Kirkpatrick H.A."/>
            <person name="Goeden M.A."/>
            <person name="Rose D.J."/>
            <person name="Mau B."/>
            <person name="Shao Y."/>
        </authorList>
    </citation>
    <scope>NUCLEOTIDE SEQUENCE [LARGE SCALE GENOMIC DNA]</scope>
    <source>
        <strain>K12 / MG1655 / ATCC 47076</strain>
    </source>
</reference>
<reference key="2">
    <citation type="journal article" date="2006" name="Mol. Syst. Biol.">
        <title>Highly accurate genome sequences of Escherichia coli K-12 strains MG1655 and W3110.</title>
        <authorList>
            <person name="Hayashi K."/>
            <person name="Morooka N."/>
            <person name="Yamamoto Y."/>
            <person name="Fujita K."/>
            <person name="Isono K."/>
            <person name="Choi S."/>
            <person name="Ohtsubo E."/>
            <person name="Baba T."/>
            <person name="Wanner B.L."/>
            <person name="Mori H."/>
            <person name="Horiuchi T."/>
        </authorList>
    </citation>
    <scope>NUCLEOTIDE SEQUENCE [LARGE SCALE GENOMIC DNA]</scope>
    <source>
        <strain>K12 / W3110 / ATCC 27325 / DSM 5911</strain>
    </source>
</reference>
<reference key="3">
    <citation type="journal article" date="2015" name="FEMS Microbiol. Lett.">
        <title>Role of transcription factor NimR (YeaM) in sensitivity control of Escherichia coli to 2-nitroimidazole.</title>
        <authorList>
            <person name="Ogasawara H."/>
            <person name="Ohe S."/>
            <person name="Ishihama A."/>
        </authorList>
    </citation>
    <scope>FUNCTION</scope>
    <scope>INDUCTION</scope>
    <source>
        <strain>K12</strain>
    </source>
</reference>